<gene>
    <name evidence="1" type="primary">dcd</name>
    <name type="ordered locus">Minf_0086</name>
</gene>
<comment type="function">
    <text evidence="1">Catalyzes the deamination of dCTP to dUTP.</text>
</comment>
<comment type="catalytic activity">
    <reaction evidence="1">
        <text>dCTP + H2O + H(+) = dUTP + NH4(+)</text>
        <dbReference type="Rhea" id="RHEA:22680"/>
        <dbReference type="ChEBI" id="CHEBI:15377"/>
        <dbReference type="ChEBI" id="CHEBI:15378"/>
        <dbReference type="ChEBI" id="CHEBI:28938"/>
        <dbReference type="ChEBI" id="CHEBI:61481"/>
        <dbReference type="ChEBI" id="CHEBI:61555"/>
        <dbReference type="EC" id="3.5.4.13"/>
    </reaction>
</comment>
<comment type="pathway">
    <text evidence="1">Pyrimidine metabolism; dUMP biosynthesis; dUMP from dCTP (dUTP route): step 1/2.</text>
</comment>
<comment type="subunit">
    <text evidence="1">Homotrimer.</text>
</comment>
<comment type="similarity">
    <text evidence="1">Belongs to the dCTP deaminase family.</text>
</comment>
<keyword id="KW-0378">Hydrolase</keyword>
<keyword id="KW-0546">Nucleotide metabolism</keyword>
<keyword id="KW-0547">Nucleotide-binding</keyword>
<dbReference type="EC" id="3.5.4.13" evidence="1"/>
<dbReference type="EMBL" id="CP000975">
    <property type="protein sequence ID" value="ACD82146.1"/>
    <property type="molecule type" value="Genomic_DNA"/>
</dbReference>
<dbReference type="RefSeq" id="WP_012462428.1">
    <property type="nucleotide sequence ID" value="NC_010794.1"/>
</dbReference>
<dbReference type="SMR" id="B3DX06"/>
<dbReference type="STRING" id="481448.Minf_0086"/>
<dbReference type="KEGG" id="min:Minf_0086"/>
<dbReference type="eggNOG" id="COG0717">
    <property type="taxonomic scope" value="Bacteria"/>
</dbReference>
<dbReference type="HOGENOM" id="CLU_087476_4_0_0"/>
<dbReference type="OrthoDB" id="9780202at2"/>
<dbReference type="UniPathway" id="UPA00610">
    <property type="reaction ID" value="UER00665"/>
</dbReference>
<dbReference type="Proteomes" id="UP000009149">
    <property type="component" value="Chromosome"/>
</dbReference>
<dbReference type="GO" id="GO:0008829">
    <property type="term" value="F:dCTP deaminase activity"/>
    <property type="evidence" value="ECO:0007669"/>
    <property type="project" value="UniProtKB-UniRule"/>
</dbReference>
<dbReference type="GO" id="GO:0000166">
    <property type="term" value="F:nucleotide binding"/>
    <property type="evidence" value="ECO:0007669"/>
    <property type="project" value="UniProtKB-KW"/>
</dbReference>
<dbReference type="GO" id="GO:0006226">
    <property type="term" value="P:dUMP biosynthetic process"/>
    <property type="evidence" value="ECO:0007669"/>
    <property type="project" value="UniProtKB-UniPathway"/>
</dbReference>
<dbReference type="GO" id="GO:0006229">
    <property type="term" value="P:dUTP biosynthetic process"/>
    <property type="evidence" value="ECO:0007669"/>
    <property type="project" value="UniProtKB-UniRule"/>
</dbReference>
<dbReference type="GO" id="GO:0015949">
    <property type="term" value="P:nucleobase-containing small molecule interconversion"/>
    <property type="evidence" value="ECO:0007669"/>
    <property type="project" value="TreeGrafter"/>
</dbReference>
<dbReference type="CDD" id="cd07557">
    <property type="entry name" value="trimeric_dUTPase"/>
    <property type="match status" value="1"/>
</dbReference>
<dbReference type="FunFam" id="2.70.40.10:FF:000001">
    <property type="entry name" value="dCTP deaminase"/>
    <property type="match status" value="1"/>
</dbReference>
<dbReference type="Gene3D" id="2.70.40.10">
    <property type="match status" value="1"/>
</dbReference>
<dbReference type="HAMAP" id="MF_00146">
    <property type="entry name" value="dCTP_deaminase"/>
    <property type="match status" value="1"/>
</dbReference>
<dbReference type="InterPro" id="IPR011962">
    <property type="entry name" value="dCTP_deaminase"/>
</dbReference>
<dbReference type="InterPro" id="IPR036157">
    <property type="entry name" value="dUTPase-like_sf"/>
</dbReference>
<dbReference type="InterPro" id="IPR033704">
    <property type="entry name" value="dUTPase_trimeric"/>
</dbReference>
<dbReference type="NCBIfam" id="TIGR02274">
    <property type="entry name" value="dCTP_deam"/>
    <property type="match status" value="1"/>
</dbReference>
<dbReference type="PANTHER" id="PTHR42680">
    <property type="entry name" value="DCTP DEAMINASE"/>
    <property type="match status" value="1"/>
</dbReference>
<dbReference type="PANTHER" id="PTHR42680:SF3">
    <property type="entry name" value="DCTP DEAMINASE"/>
    <property type="match status" value="1"/>
</dbReference>
<dbReference type="Pfam" id="PF22769">
    <property type="entry name" value="DCD"/>
    <property type="match status" value="1"/>
</dbReference>
<dbReference type="SUPFAM" id="SSF51283">
    <property type="entry name" value="dUTPase-like"/>
    <property type="match status" value="1"/>
</dbReference>
<name>DCD_METI4</name>
<accession>B3DX06</accession>
<organism>
    <name type="scientific">Methylacidiphilum infernorum (isolate V4)</name>
    <name type="common">Methylokorus infernorum (strain V4)</name>
    <dbReference type="NCBI Taxonomy" id="481448"/>
    <lineage>
        <taxon>Bacteria</taxon>
        <taxon>Pseudomonadati</taxon>
        <taxon>Verrucomicrobiota</taxon>
        <taxon>Methylacidiphilae</taxon>
        <taxon>Methylacidiphilales</taxon>
        <taxon>Methylacidiphilaceae</taxon>
        <taxon>Methylacidiphilum (ex Ratnadevi et al. 2023)</taxon>
    </lineage>
</organism>
<evidence type="ECO:0000255" key="1">
    <source>
        <dbReference type="HAMAP-Rule" id="MF_00146"/>
    </source>
</evidence>
<proteinExistence type="inferred from homology"/>
<protein>
    <recommendedName>
        <fullName evidence="1">dCTP deaminase</fullName>
        <ecNumber evidence="1">3.5.4.13</ecNumber>
    </recommendedName>
    <alternativeName>
        <fullName evidence="1">Deoxycytidine triphosphate deaminase</fullName>
    </alternativeName>
</protein>
<feature type="chain" id="PRO_1000096437" description="dCTP deaminase">
    <location>
        <begin position="1"/>
        <end position="189"/>
    </location>
</feature>
<feature type="active site" description="Proton donor/acceptor" evidence="1">
    <location>
        <position position="138"/>
    </location>
</feature>
<feature type="binding site" evidence="1">
    <location>
        <begin position="112"/>
        <end position="117"/>
    </location>
    <ligand>
        <name>dCTP</name>
        <dbReference type="ChEBI" id="CHEBI:61481"/>
    </ligand>
</feature>
<feature type="binding site" evidence="1">
    <location>
        <begin position="136"/>
        <end position="138"/>
    </location>
    <ligand>
        <name>dCTP</name>
        <dbReference type="ChEBI" id="CHEBI:61481"/>
    </ligand>
</feature>
<feature type="binding site" evidence="1">
    <location>
        <position position="157"/>
    </location>
    <ligand>
        <name>dCTP</name>
        <dbReference type="ChEBI" id="CHEBI:61481"/>
    </ligand>
</feature>
<feature type="binding site" evidence="1">
    <location>
        <position position="171"/>
    </location>
    <ligand>
        <name>dCTP</name>
        <dbReference type="ChEBI" id="CHEBI:61481"/>
    </ligand>
</feature>
<feature type="binding site" evidence="1">
    <location>
        <position position="181"/>
    </location>
    <ligand>
        <name>dCTP</name>
        <dbReference type="ChEBI" id="CHEBI:61481"/>
    </ligand>
</feature>
<sequence>MGVHSDDWIRQMVKKHRMIEPFEESQVRKKVDGSQVISFGLSSYGYDLRVSREFKIFTNVFNSVVDPKAFDPRSFVEMESDCCIIPPNSFALARSVEYFRIPRDVITICLGKSTYARCGIIVNVTPFEPEWEGYATLEISNTTPLPAKVYAEEGLAQVIFIQASEPCSISYAERNGKYMYQKGVTVPRL</sequence>
<reference key="1">
    <citation type="journal article" date="2008" name="Biol. Direct">
        <title>Complete genome sequence of the extremely acidophilic methanotroph isolate V4, Methylacidiphilum infernorum, a representative of the bacterial phylum Verrucomicrobia.</title>
        <authorList>
            <person name="Hou S."/>
            <person name="Makarova K.S."/>
            <person name="Saw J.H."/>
            <person name="Senin P."/>
            <person name="Ly B.V."/>
            <person name="Zhou Z."/>
            <person name="Ren Y."/>
            <person name="Wang J."/>
            <person name="Galperin M.Y."/>
            <person name="Omelchenko M.V."/>
            <person name="Wolf Y.I."/>
            <person name="Yutin N."/>
            <person name="Koonin E.V."/>
            <person name="Stott M.B."/>
            <person name="Mountain B.W."/>
            <person name="Crowe M.A."/>
            <person name="Smirnova A.V."/>
            <person name="Dunfield P.F."/>
            <person name="Feng L."/>
            <person name="Wang L."/>
            <person name="Alam M."/>
        </authorList>
    </citation>
    <scope>NUCLEOTIDE SEQUENCE [LARGE SCALE GENOMIC DNA]</scope>
    <source>
        <strain>Isolate V4</strain>
    </source>
</reference>